<name>RS13_KOCRD</name>
<proteinExistence type="inferred from homology"/>
<accession>B2GJ18</accession>
<keyword id="KW-1185">Reference proteome</keyword>
<keyword id="KW-0687">Ribonucleoprotein</keyword>
<keyword id="KW-0689">Ribosomal protein</keyword>
<keyword id="KW-0694">RNA-binding</keyword>
<keyword id="KW-0699">rRNA-binding</keyword>
<keyword id="KW-0820">tRNA-binding</keyword>
<gene>
    <name evidence="1" type="primary">rpsM</name>
    <name type="ordered locus">KRH_06410</name>
</gene>
<protein>
    <recommendedName>
        <fullName evidence="1">Small ribosomal subunit protein uS13</fullName>
    </recommendedName>
    <alternativeName>
        <fullName evidence="3">30S ribosomal protein S13</fullName>
    </alternativeName>
</protein>
<reference key="1">
    <citation type="journal article" date="2008" name="J. Bacteriol.">
        <title>Complete genome sequence of the soil actinomycete Kocuria rhizophila.</title>
        <authorList>
            <person name="Takarada H."/>
            <person name="Sekine M."/>
            <person name="Kosugi H."/>
            <person name="Matsuo Y."/>
            <person name="Fujisawa T."/>
            <person name="Omata S."/>
            <person name="Kishi E."/>
            <person name="Shimizu A."/>
            <person name="Tsukatani N."/>
            <person name="Tanikawa S."/>
            <person name="Fujita N."/>
            <person name="Harayama S."/>
        </authorList>
    </citation>
    <scope>NUCLEOTIDE SEQUENCE [LARGE SCALE GENOMIC DNA]</scope>
    <source>
        <strain>ATCC 9341 / DSM 348 / NBRC 103217 / DC2201</strain>
    </source>
</reference>
<comment type="function">
    <text evidence="1">Located at the top of the head of the 30S subunit, it contacts several helices of the 16S rRNA. In the 70S ribosome it contacts the 23S rRNA (bridge B1a) and protein L5 of the 50S subunit (bridge B1b), connecting the 2 subunits; these bridges are implicated in subunit movement. Contacts the tRNAs in the A and P-sites.</text>
</comment>
<comment type="subunit">
    <text evidence="1">Part of the 30S ribosomal subunit. Forms a loose heterodimer with protein S19. Forms two bridges to the 50S subunit in the 70S ribosome.</text>
</comment>
<comment type="similarity">
    <text evidence="1">Belongs to the universal ribosomal protein uS13 family.</text>
</comment>
<evidence type="ECO:0000255" key="1">
    <source>
        <dbReference type="HAMAP-Rule" id="MF_01315"/>
    </source>
</evidence>
<evidence type="ECO:0000256" key="2">
    <source>
        <dbReference type="SAM" id="MobiDB-lite"/>
    </source>
</evidence>
<evidence type="ECO:0000305" key="3"/>
<sequence>MARLAGVDLPREKRLEVALTYIYGVGRTRALETLEATGISGDVRVKDLTDPQLVELRDYIEGNYKVEGDLRREVAADIRRKVEIGSYQGLRHRRGLPVHGQRTKTNARTRKGPKRTVAGKKK</sequence>
<organism>
    <name type="scientific">Kocuria rhizophila (strain ATCC 9341 / DSM 348 / NBRC 103217 / DC2201)</name>
    <dbReference type="NCBI Taxonomy" id="378753"/>
    <lineage>
        <taxon>Bacteria</taxon>
        <taxon>Bacillati</taxon>
        <taxon>Actinomycetota</taxon>
        <taxon>Actinomycetes</taxon>
        <taxon>Micrococcales</taxon>
        <taxon>Micrococcaceae</taxon>
        <taxon>Kocuria</taxon>
    </lineage>
</organism>
<feature type="chain" id="PRO_1000141275" description="Small ribosomal subunit protein uS13">
    <location>
        <begin position="1"/>
        <end position="122"/>
    </location>
</feature>
<feature type="region of interest" description="Disordered" evidence="2">
    <location>
        <begin position="91"/>
        <end position="122"/>
    </location>
</feature>
<dbReference type="EMBL" id="AP009152">
    <property type="protein sequence ID" value="BAG28988.1"/>
    <property type="molecule type" value="Genomic_DNA"/>
</dbReference>
<dbReference type="RefSeq" id="WP_012397713.1">
    <property type="nucleotide sequence ID" value="NZ_VECX01000001.1"/>
</dbReference>
<dbReference type="SMR" id="B2GJ18"/>
<dbReference type="STRING" id="378753.KRH_06410"/>
<dbReference type="GeneID" id="93232769"/>
<dbReference type="KEGG" id="krh:KRH_06410"/>
<dbReference type="eggNOG" id="COG0099">
    <property type="taxonomic scope" value="Bacteria"/>
</dbReference>
<dbReference type="HOGENOM" id="CLU_103849_1_2_11"/>
<dbReference type="OrthoDB" id="9803610at2"/>
<dbReference type="Proteomes" id="UP000008838">
    <property type="component" value="Chromosome"/>
</dbReference>
<dbReference type="GO" id="GO:0005829">
    <property type="term" value="C:cytosol"/>
    <property type="evidence" value="ECO:0007669"/>
    <property type="project" value="TreeGrafter"/>
</dbReference>
<dbReference type="GO" id="GO:0015935">
    <property type="term" value="C:small ribosomal subunit"/>
    <property type="evidence" value="ECO:0007669"/>
    <property type="project" value="TreeGrafter"/>
</dbReference>
<dbReference type="GO" id="GO:0019843">
    <property type="term" value="F:rRNA binding"/>
    <property type="evidence" value="ECO:0007669"/>
    <property type="project" value="UniProtKB-UniRule"/>
</dbReference>
<dbReference type="GO" id="GO:0003735">
    <property type="term" value="F:structural constituent of ribosome"/>
    <property type="evidence" value="ECO:0007669"/>
    <property type="project" value="InterPro"/>
</dbReference>
<dbReference type="GO" id="GO:0000049">
    <property type="term" value="F:tRNA binding"/>
    <property type="evidence" value="ECO:0007669"/>
    <property type="project" value="UniProtKB-UniRule"/>
</dbReference>
<dbReference type="GO" id="GO:0006412">
    <property type="term" value="P:translation"/>
    <property type="evidence" value="ECO:0007669"/>
    <property type="project" value="UniProtKB-UniRule"/>
</dbReference>
<dbReference type="FunFam" id="1.10.8.50:FF:000001">
    <property type="entry name" value="30S ribosomal protein S13"/>
    <property type="match status" value="1"/>
</dbReference>
<dbReference type="FunFam" id="4.10.910.10:FF:000001">
    <property type="entry name" value="30S ribosomal protein S13"/>
    <property type="match status" value="1"/>
</dbReference>
<dbReference type="Gene3D" id="1.10.8.50">
    <property type="match status" value="1"/>
</dbReference>
<dbReference type="Gene3D" id="4.10.910.10">
    <property type="entry name" value="30s ribosomal protein s13, domain 2"/>
    <property type="match status" value="1"/>
</dbReference>
<dbReference type="HAMAP" id="MF_01315">
    <property type="entry name" value="Ribosomal_uS13"/>
    <property type="match status" value="1"/>
</dbReference>
<dbReference type="InterPro" id="IPR027437">
    <property type="entry name" value="Rbsml_uS13_C"/>
</dbReference>
<dbReference type="InterPro" id="IPR001892">
    <property type="entry name" value="Ribosomal_uS13"/>
</dbReference>
<dbReference type="InterPro" id="IPR010979">
    <property type="entry name" value="Ribosomal_uS13-like_H2TH"/>
</dbReference>
<dbReference type="InterPro" id="IPR019980">
    <property type="entry name" value="Ribosomal_uS13_bac-type"/>
</dbReference>
<dbReference type="InterPro" id="IPR018269">
    <property type="entry name" value="Ribosomal_uS13_CS"/>
</dbReference>
<dbReference type="NCBIfam" id="TIGR03631">
    <property type="entry name" value="uS13_bact"/>
    <property type="match status" value="1"/>
</dbReference>
<dbReference type="PANTHER" id="PTHR10871">
    <property type="entry name" value="30S RIBOSOMAL PROTEIN S13/40S RIBOSOMAL PROTEIN S18"/>
    <property type="match status" value="1"/>
</dbReference>
<dbReference type="PANTHER" id="PTHR10871:SF1">
    <property type="entry name" value="SMALL RIBOSOMAL SUBUNIT PROTEIN US13M"/>
    <property type="match status" value="1"/>
</dbReference>
<dbReference type="Pfam" id="PF00416">
    <property type="entry name" value="Ribosomal_S13"/>
    <property type="match status" value="1"/>
</dbReference>
<dbReference type="PIRSF" id="PIRSF002134">
    <property type="entry name" value="Ribosomal_S13"/>
    <property type="match status" value="1"/>
</dbReference>
<dbReference type="SUPFAM" id="SSF46946">
    <property type="entry name" value="S13-like H2TH domain"/>
    <property type="match status" value="1"/>
</dbReference>
<dbReference type="PROSITE" id="PS00646">
    <property type="entry name" value="RIBOSOMAL_S13_1"/>
    <property type="match status" value="1"/>
</dbReference>
<dbReference type="PROSITE" id="PS50159">
    <property type="entry name" value="RIBOSOMAL_S13_2"/>
    <property type="match status" value="1"/>
</dbReference>